<name>MATK_QUERO</name>
<geneLocation type="chloroplast"/>
<feature type="chain" id="PRO_0000143666" description="Maturase K">
    <location>
        <begin position="1"/>
        <end position="504"/>
    </location>
</feature>
<protein>
    <recommendedName>
        <fullName evidence="1">Maturase K</fullName>
    </recommendedName>
    <alternativeName>
        <fullName evidence="1">Intron maturase</fullName>
    </alternativeName>
</protein>
<organism>
    <name type="scientific">Quercus robur</name>
    <name type="common">English oak</name>
    <dbReference type="NCBI Taxonomy" id="38942"/>
    <lineage>
        <taxon>Eukaryota</taxon>
        <taxon>Viridiplantae</taxon>
        <taxon>Streptophyta</taxon>
        <taxon>Embryophyta</taxon>
        <taxon>Tracheophyta</taxon>
        <taxon>Spermatophyta</taxon>
        <taxon>Magnoliopsida</taxon>
        <taxon>eudicotyledons</taxon>
        <taxon>Gunneridae</taxon>
        <taxon>Pentapetalae</taxon>
        <taxon>rosids</taxon>
        <taxon>fabids</taxon>
        <taxon>Fagales</taxon>
        <taxon>Fagaceae</taxon>
        <taxon>Quercus</taxon>
    </lineage>
</organism>
<accession>Q8M920</accession>
<proteinExistence type="inferred from homology"/>
<comment type="function">
    <text evidence="1">Usually encoded in the trnK tRNA gene intron. Probably assists in splicing its own and other chloroplast group II introns.</text>
</comment>
<comment type="subcellular location">
    <subcellularLocation>
        <location>Plastid</location>
        <location>Chloroplast</location>
    </subcellularLocation>
</comment>
<comment type="similarity">
    <text evidence="1">Belongs to the intron maturase 2 family. MatK subfamily.</text>
</comment>
<dbReference type="EMBL" id="AJ491718">
    <property type="protein sequence ID" value="CAD36963.1"/>
    <property type="molecule type" value="Genomic_DNA"/>
</dbReference>
<dbReference type="GO" id="GO:0009507">
    <property type="term" value="C:chloroplast"/>
    <property type="evidence" value="ECO:0007669"/>
    <property type="project" value="UniProtKB-SubCell"/>
</dbReference>
<dbReference type="GO" id="GO:0003723">
    <property type="term" value="F:RNA binding"/>
    <property type="evidence" value="ECO:0007669"/>
    <property type="project" value="UniProtKB-KW"/>
</dbReference>
<dbReference type="GO" id="GO:0006397">
    <property type="term" value="P:mRNA processing"/>
    <property type="evidence" value="ECO:0007669"/>
    <property type="project" value="UniProtKB-KW"/>
</dbReference>
<dbReference type="GO" id="GO:0008380">
    <property type="term" value="P:RNA splicing"/>
    <property type="evidence" value="ECO:0007669"/>
    <property type="project" value="UniProtKB-UniRule"/>
</dbReference>
<dbReference type="GO" id="GO:0008033">
    <property type="term" value="P:tRNA processing"/>
    <property type="evidence" value="ECO:0007669"/>
    <property type="project" value="UniProtKB-KW"/>
</dbReference>
<dbReference type="HAMAP" id="MF_01390">
    <property type="entry name" value="MatK"/>
    <property type="match status" value="1"/>
</dbReference>
<dbReference type="InterPro" id="IPR024937">
    <property type="entry name" value="Domain_X"/>
</dbReference>
<dbReference type="InterPro" id="IPR002866">
    <property type="entry name" value="Maturase_MatK"/>
</dbReference>
<dbReference type="InterPro" id="IPR024942">
    <property type="entry name" value="Maturase_MatK_N"/>
</dbReference>
<dbReference type="PANTHER" id="PTHR34811">
    <property type="entry name" value="MATURASE K"/>
    <property type="match status" value="1"/>
</dbReference>
<dbReference type="PANTHER" id="PTHR34811:SF1">
    <property type="entry name" value="MATURASE K"/>
    <property type="match status" value="1"/>
</dbReference>
<dbReference type="Pfam" id="PF01348">
    <property type="entry name" value="Intron_maturas2"/>
    <property type="match status" value="1"/>
</dbReference>
<dbReference type="Pfam" id="PF01824">
    <property type="entry name" value="MatK_N"/>
    <property type="match status" value="1"/>
</dbReference>
<reference key="1">
    <citation type="journal article" date="2002" name="Mol. Ecol.">
        <title>Phylogeography of the common ivy (Hedera sp.) in Europe: genetic differentiation through space and time.</title>
        <authorList>
            <person name="Grivet D."/>
            <person name="Petit R.J."/>
        </authorList>
    </citation>
    <scope>NUCLEOTIDE SEQUENCE [GENOMIC DNA]</scope>
</reference>
<gene>
    <name evidence="1" type="primary">matK</name>
</gene>
<sequence length="504" mass="59321">MEEFQGYLELDIFRQHDFLYPLIFREYSXXXAHGHGLNRYMLLENIGYDNKSSLLIVKRLITTMYQQNYLIISANDSKQNPFFGYNKNLHSKILSEGFAIIVEIPFYLRLISSLEGAEIVRFYNLRSIHSIFPFLEEKFPHLNYSADILIPYPAHLEILVQTLRYRVKDASYLHLLRFFLHEYSNCNSLIITNKSISIFSKSNPRFFLFLYNSYICEYESIFLFLRNQSSHLRLTSSGVLFERLCLYRKIEHFAEVFANDFPVIPCFLKDPFMHYVRYQGKSILASKDTPLLMNKWKSYLVNLWQCHFDVWSHAASIRINQLSKHSLDFLSYFSSVRRNPAVVRNQMLENSFLLNNAPNKLDTIVPIIPLIGSLAKAKFCNAVGHPISKLTRADLSDFEIINRFLHICRNLSHYYSGSSKKKNMYRIKYILRLSCVKTLARKHKSTARAFLKRVDSEFFQEFFTEEGGFISLIFPRASFALRRLYSGRVWYLDIIFINGLSNHE</sequence>
<keyword id="KW-0150">Chloroplast</keyword>
<keyword id="KW-0507">mRNA processing</keyword>
<keyword id="KW-0934">Plastid</keyword>
<keyword id="KW-0694">RNA-binding</keyword>
<keyword id="KW-0819">tRNA processing</keyword>
<evidence type="ECO:0000255" key="1">
    <source>
        <dbReference type="HAMAP-Rule" id="MF_01390"/>
    </source>
</evidence>